<dbReference type="EMBL" id="CP017630">
    <property type="protein sequence ID" value="AOW31091.1"/>
    <property type="molecule type" value="Genomic_DNA"/>
</dbReference>
<dbReference type="RefSeq" id="XP_715172.2">
    <property type="nucleotide sequence ID" value="XM_710079.2"/>
</dbReference>
<dbReference type="SMR" id="Q5A044"/>
<dbReference type="FunCoup" id="Q5A044">
    <property type="interactions" value="214"/>
</dbReference>
<dbReference type="STRING" id="237561.Q5A044"/>
<dbReference type="EnsemblFungi" id="CR_03530W_A-T">
    <property type="protein sequence ID" value="CR_03530W_A-T-p1"/>
    <property type="gene ID" value="CR_03530W_A"/>
</dbReference>
<dbReference type="GeneID" id="3643204"/>
<dbReference type="KEGG" id="cal:CAALFM_CR03530WA"/>
<dbReference type="CGD" id="CAL0000200955">
    <property type="gene designation" value="orf19.11874"/>
</dbReference>
<dbReference type="VEuPathDB" id="FungiDB:CR_03530W_A"/>
<dbReference type="eggNOG" id="KOG1854">
    <property type="taxonomic scope" value="Eukaryota"/>
</dbReference>
<dbReference type="HOGENOM" id="CLU_008024_2_0_1"/>
<dbReference type="InParanoid" id="Q5A044"/>
<dbReference type="OrthoDB" id="10261039at2759"/>
<dbReference type="PRO" id="PR:Q5A044"/>
<dbReference type="Proteomes" id="UP000000559">
    <property type="component" value="Chromosome R"/>
</dbReference>
<dbReference type="GO" id="GO:0061617">
    <property type="term" value="C:MICOS complex"/>
    <property type="evidence" value="ECO:0000318"/>
    <property type="project" value="GO_Central"/>
</dbReference>
<dbReference type="GO" id="GO:0005886">
    <property type="term" value="C:plasma membrane"/>
    <property type="evidence" value="ECO:0000314"/>
    <property type="project" value="CGD"/>
</dbReference>
<dbReference type="GO" id="GO:0042407">
    <property type="term" value="P:cristae formation"/>
    <property type="evidence" value="ECO:0000318"/>
    <property type="project" value="GO_Central"/>
</dbReference>
<dbReference type="InterPro" id="IPR019133">
    <property type="entry name" value="MIC60"/>
</dbReference>
<dbReference type="PANTHER" id="PTHR15415:SF7">
    <property type="entry name" value="MICOS COMPLEX SUBUNIT MIC60"/>
    <property type="match status" value="1"/>
</dbReference>
<dbReference type="PANTHER" id="PTHR15415">
    <property type="entry name" value="MITOFILIN"/>
    <property type="match status" value="1"/>
</dbReference>
<dbReference type="Pfam" id="PF09731">
    <property type="entry name" value="Mitofilin"/>
    <property type="match status" value="1"/>
</dbReference>
<dbReference type="SUPFAM" id="SSF101447">
    <property type="entry name" value="Formin homology 2 domain (FH2 domain)"/>
    <property type="match status" value="1"/>
</dbReference>
<evidence type="ECO:0000250" key="1"/>
<evidence type="ECO:0000255" key="2"/>
<evidence type="ECO:0000256" key="3">
    <source>
        <dbReference type="SAM" id="MobiDB-lite"/>
    </source>
</evidence>
<evidence type="ECO:0000305" key="4"/>
<protein>
    <recommendedName>
        <fullName>MICOS complex subunit MIC60</fullName>
    </recommendedName>
    <alternativeName>
        <fullName>Mitofilin</fullName>
    </alternativeName>
</protein>
<accession>Q5A044</accession>
<accession>A0A1D8PSI1</accession>
<accession>Q59ZZ2</accession>
<gene>
    <name type="primary">MIC60</name>
    <name type="synonym">FMP13</name>
    <name type="ordered locus">CAALFM_CR03530WA</name>
    <name type="ORF">CaO19.11874</name>
    <name type="ORF">CaO19.4396</name>
</gene>
<name>MIC60_CANAL</name>
<proteinExistence type="inferred from homology"/>
<keyword id="KW-0175">Coiled coil</keyword>
<keyword id="KW-0472">Membrane</keyword>
<keyword id="KW-0496">Mitochondrion</keyword>
<keyword id="KW-0999">Mitochondrion inner membrane</keyword>
<keyword id="KW-1185">Reference proteome</keyword>
<keyword id="KW-0809">Transit peptide</keyword>
<keyword id="KW-0812">Transmembrane</keyword>
<keyword id="KW-1133">Transmembrane helix</keyword>
<organism>
    <name type="scientific">Candida albicans (strain SC5314 / ATCC MYA-2876)</name>
    <name type="common">Yeast</name>
    <dbReference type="NCBI Taxonomy" id="237561"/>
    <lineage>
        <taxon>Eukaryota</taxon>
        <taxon>Fungi</taxon>
        <taxon>Dikarya</taxon>
        <taxon>Ascomycota</taxon>
        <taxon>Saccharomycotina</taxon>
        <taxon>Pichiomycetes</taxon>
        <taxon>Debaryomycetaceae</taxon>
        <taxon>Candida/Lodderomyces clade</taxon>
        <taxon>Candida</taxon>
    </lineage>
</organism>
<sequence>MIRITSRSVKGAAGIRSVSSSTVRLNIAPKVVSPPVPPPVKPQGSEIPPPPPPPPPPPKAKRFSLFGFLFKTTLLATVVYGGTLYAATKNDKVMDFVIDKQLPFHEELIDLIENGSTEDLQEAWEQLKNKFTDVKLPTKDDIDELTQKLEHRGEDIIKETKKKIASTHIGHKSGTDLTPTEQLQRGVEIESVKKDVAHLPLIELNSDLGKSVDETVKQTITSFNNFIQSIDASSLATKDDKLITSINTSVNQLASRLNSLTKDFDNELQNKLKVSQTELFSSFTKKELELTENLLHQFSTEKQQLEAKLNQKLSQEIQAARAAISQAASNAVAMVRIEQTKNFEKLVSEKLNEERNGRLANLEKLNDRIVELEKFAEGFETQIVSNHKKAIIHQAVSKLKSLLLAPAAGDKPQPIKPYIDELTKIATDDEVLALAIKDLSPLITNESTHSILTNAQLLSRWEQLAPELRSASLLPPNAGLLGHLASIVFSKLLLPVKGVKEDGKDIESVIGRVESSLARGELDIAVEEAANLKGWSRKLANDWVVEGRKRLEIEFLLGLIESESKII</sequence>
<comment type="function">
    <text evidence="1">Component of the MICOS complex, a large protein complex of the mitochondrial inner membrane that plays crucial roles in the maintenance of crista junctions, inner membrane architecture, and formation of contact sites to the outer membrane. Plays a role in keeping cristae membranes connected to the inner boundary membrane. Also promotes protein import via the mitochondrial intermembrane space assembly (MIA) pathway (By similarity).</text>
</comment>
<comment type="subunit">
    <text evidence="1">Component of the mitochondrial contact site and cristae organizing system (MICOS) complex.</text>
</comment>
<comment type="subcellular location">
    <subcellularLocation>
        <location evidence="1">Mitochondrion inner membrane</location>
        <topology evidence="1">Single-pass membrane protein</topology>
    </subcellularLocation>
</comment>
<comment type="similarity">
    <text evidence="4">Belongs to the MICOS complex subunit Mic60 family.</text>
</comment>
<reference key="1">
    <citation type="journal article" date="2004" name="Proc. Natl. Acad. Sci. U.S.A.">
        <title>The diploid genome sequence of Candida albicans.</title>
        <authorList>
            <person name="Jones T."/>
            <person name="Federspiel N.A."/>
            <person name="Chibana H."/>
            <person name="Dungan J."/>
            <person name="Kalman S."/>
            <person name="Magee B.B."/>
            <person name="Newport G."/>
            <person name="Thorstenson Y.R."/>
            <person name="Agabian N."/>
            <person name="Magee P.T."/>
            <person name="Davis R.W."/>
            <person name="Scherer S."/>
        </authorList>
    </citation>
    <scope>NUCLEOTIDE SEQUENCE [LARGE SCALE GENOMIC DNA]</scope>
    <source>
        <strain>SC5314 / ATCC MYA-2876</strain>
    </source>
</reference>
<reference key="2">
    <citation type="journal article" date="2007" name="Genome Biol.">
        <title>Assembly of the Candida albicans genome into sixteen supercontigs aligned on the eight chromosomes.</title>
        <authorList>
            <person name="van het Hoog M."/>
            <person name="Rast T.J."/>
            <person name="Martchenko M."/>
            <person name="Grindle S."/>
            <person name="Dignard D."/>
            <person name="Hogues H."/>
            <person name="Cuomo C."/>
            <person name="Berriman M."/>
            <person name="Scherer S."/>
            <person name="Magee B.B."/>
            <person name="Whiteway M."/>
            <person name="Chibana H."/>
            <person name="Nantel A."/>
            <person name="Magee P.T."/>
        </authorList>
    </citation>
    <scope>GENOME REANNOTATION</scope>
    <source>
        <strain>SC5314 / ATCC MYA-2876</strain>
    </source>
</reference>
<reference key="3">
    <citation type="journal article" date="2013" name="Genome Biol.">
        <title>Assembly of a phased diploid Candida albicans genome facilitates allele-specific measurements and provides a simple model for repeat and indel structure.</title>
        <authorList>
            <person name="Muzzey D."/>
            <person name="Schwartz K."/>
            <person name="Weissman J.S."/>
            <person name="Sherlock G."/>
        </authorList>
    </citation>
    <scope>NUCLEOTIDE SEQUENCE [LARGE SCALE GENOMIC DNA]</scope>
    <scope>GENOME REANNOTATION</scope>
    <source>
        <strain>SC5314 / ATCC MYA-2876</strain>
    </source>
</reference>
<feature type="transit peptide" description="Mitochondrion" evidence="2">
    <location>
        <begin position="1"/>
        <end position="25"/>
    </location>
</feature>
<feature type="chain" id="PRO_0000406648" description="MICOS complex subunit MIC60">
    <location>
        <begin position="26"/>
        <end position="567"/>
    </location>
</feature>
<feature type="topological domain" description="Mitochondrial matrix" evidence="2">
    <location>
        <begin position="26"/>
        <end position="64"/>
    </location>
</feature>
<feature type="transmembrane region" description="Helical" evidence="2">
    <location>
        <begin position="65"/>
        <end position="87"/>
    </location>
</feature>
<feature type="topological domain" description="Mitochondrial intermembrane" evidence="2">
    <location>
        <begin position="88"/>
        <end position="567"/>
    </location>
</feature>
<feature type="region of interest" description="Disordered" evidence="3">
    <location>
        <begin position="31"/>
        <end position="59"/>
    </location>
</feature>
<feature type="coiled-coil region" evidence="2">
    <location>
        <begin position="284"/>
        <end position="383"/>
    </location>
</feature>
<feature type="compositionally biased region" description="Pro residues" evidence="3">
    <location>
        <begin position="32"/>
        <end position="58"/>
    </location>
</feature>